<evidence type="ECO:0000250" key="1"/>
<evidence type="ECO:0000255" key="2"/>
<evidence type="ECO:0000255" key="3">
    <source>
        <dbReference type="PROSITE-ProRule" id="PRU00798"/>
    </source>
</evidence>
<evidence type="ECO:0000305" key="4"/>
<feature type="signal peptide" evidence="2">
    <location>
        <begin position="1"/>
        <end position="20"/>
    </location>
</feature>
<feature type="chain" id="PRO_0000420717" description="Turripeptide Gsp9.3">
    <location>
        <begin position="21"/>
        <end position="70"/>
    </location>
</feature>
<feature type="domain" description="Kazal-like" evidence="3">
    <location>
        <begin position="21"/>
        <end position="70"/>
    </location>
</feature>
<feature type="site" description="Reactive bond" evidence="3">
    <location>
        <begin position="32"/>
        <end position="33"/>
    </location>
</feature>
<feature type="disulfide bond" evidence="3">
    <location>
        <begin position="26"/>
        <end position="56"/>
    </location>
</feature>
<feature type="disulfide bond" evidence="3">
    <location>
        <begin position="30"/>
        <end position="49"/>
    </location>
</feature>
<feature type="disulfide bond" evidence="3">
    <location>
        <begin position="38"/>
        <end position="70"/>
    </location>
</feature>
<comment type="function">
    <text evidence="1">Acts as a neurotoxin by inhibiting an ion channel (By similarity). May also act as a serine protease inhibitor, since it possess the kazal serine protease inhibitor signature.</text>
</comment>
<comment type="subcellular location">
    <subcellularLocation>
        <location evidence="1">Secreted</location>
    </subcellularLocation>
</comment>
<comment type="tissue specificity">
    <text>Expressed by the venom duct.</text>
</comment>
<comment type="domain">
    <text>The cysteine framework is IX (C-C-C-C-C-C).</text>
</comment>
<comment type="similarity">
    <text evidence="4">Belongs to the conopeptide P-like superfamily.</text>
</comment>
<organism>
    <name type="scientific">Gemmula speciosa</name>
    <name type="common">Splendid gem-turris</name>
    <name type="synonym">Pleurotoma speciosa</name>
    <dbReference type="NCBI Taxonomy" id="439592"/>
    <lineage>
        <taxon>Eukaryota</taxon>
        <taxon>Metazoa</taxon>
        <taxon>Spiralia</taxon>
        <taxon>Lophotrochozoa</taxon>
        <taxon>Mollusca</taxon>
        <taxon>Gastropoda</taxon>
        <taxon>Caenogastropoda</taxon>
        <taxon>Neogastropoda</taxon>
        <taxon>Conoidea</taxon>
        <taxon>Turridae</taxon>
        <taxon>Gemmula</taxon>
    </lineage>
</organism>
<proteinExistence type="evidence at transcript level"/>
<sequence length="70" mass="7765">MKVYCLLLVLLVGLVSQAHGQLDKKCQMVCTFDYRPVCGSDGRTYPNKCTLTSTACMSQRSITVFHDGEC</sequence>
<keyword id="KW-1015">Disulfide bond</keyword>
<keyword id="KW-0872">Ion channel impairing toxin</keyword>
<keyword id="KW-0528">Neurotoxin</keyword>
<keyword id="KW-0646">Protease inhibitor</keyword>
<keyword id="KW-0964">Secreted</keyword>
<keyword id="KW-0722">Serine protease inhibitor</keyword>
<keyword id="KW-0732">Signal</keyword>
<keyword id="KW-0800">Toxin</keyword>
<dbReference type="SMR" id="P0DKT3"/>
<dbReference type="GO" id="GO:0005576">
    <property type="term" value="C:extracellular region"/>
    <property type="evidence" value="ECO:0007669"/>
    <property type="project" value="UniProtKB-SubCell"/>
</dbReference>
<dbReference type="GO" id="GO:0099106">
    <property type="term" value="F:ion channel regulator activity"/>
    <property type="evidence" value="ECO:0007669"/>
    <property type="project" value="UniProtKB-KW"/>
</dbReference>
<dbReference type="GO" id="GO:0004867">
    <property type="term" value="F:serine-type endopeptidase inhibitor activity"/>
    <property type="evidence" value="ECO:0007669"/>
    <property type="project" value="UniProtKB-KW"/>
</dbReference>
<dbReference type="GO" id="GO:0090729">
    <property type="term" value="F:toxin activity"/>
    <property type="evidence" value="ECO:0007669"/>
    <property type="project" value="UniProtKB-KW"/>
</dbReference>
<dbReference type="GO" id="GO:0030154">
    <property type="term" value="P:cell differentiation"/>
    <property type="evidence" value="ECO:0007669"/>
    <property type="project" value="TreeGrafter"/>
</dbReference>
<dbReference type="CDD" id="cd00104">
    <property type="entry name" value="KAZAL_FS"/>
    <property type="match status" value="1"/>
</dbReference>
<dbReference type="Gene3D" id="3.30.60.30">
    <property type="match status" value="1"/>
</dbReference>
<dbReference type="InterPro" id="IPR002350">
    <property type="entry name" value="Kazal_dom"/>
</dbReference>
<dbReference type="InterPro" id="IPR036058">
    <property type="entry name" value="Kazal_dom_sf"/>
</dbReference>
<dbReference type="InterPro" id="IPR050653">
    <property type="entry name" value="Prot_Inhib_GrowthFact_Antg"/>
</dbReference>
<dbReference type="PANTHER" id="PTHR10913:SF45">
    <property type="entry name" value="FOLLISTATIN, ISOFORM A-RELATED"/>
    <property type="match status" value="1"/>
</dbReference>
<dbReference type="PANTHER" id="PTHR10913">
    <property type="entry name" value="FOLLISTATIN-RELATED"/>
    <property type="match status" value="1"/>
</dbReference>
<dbReference type="Pfam" id="PF07648">
    <property type="entry name" value="Kazal_2"/>
    <property type="match status" value="1"/>
</dbReference>
<dbReference type="SMART" id="SM00280">
    <property type="entry name" value="KAZAL"/>
    <property type="match status" value="1"/>
</dbReference>
<dbReference type="SUPFAM" id="SSF100895">
    <property type="entry name" value="Kazal-type serine protease inhibitors"/>
    <property type="match status" value="1"/>
</dbReference>
<dbReference type="PROSITE" id="PS51465">
    <property type="entry name" value="KAZAL_2"/>
    <property type="match status" value="1"/>
</dbReference>
<name>TU93_GEMSP</name>
<accession>P0DKT3</accession>
<protein>
    <recommendedName>
        <fullName>Turripeptide Gsp9.3</fullName>
    </recommendedName>
</protein>
<reference key="1">
    <citation type="journal article" date="2012" name="Ann. N. Y. Acad. Sci.">
        <title>Adaptive radiation of venomous marine snail lineages and the accelerated evolution of venom peptide genes.</title>
        <authorList>
            <person name="Olivera B.M."/>
            <person name="Watkins M."/>
            <person name="Bandyopadhyay P."/>
            <person name="Imperial J.S."/>
            <person name="de la Cotera E.P."/>
            <person name="Aguilar M.B."/>
            <person name="Vera E.L."/>
            <person name="Concepcion G.P."/>
            <person name="Lluisma A."/>
        </authorList>
    </citation>
    <scope>NUCLEOTIDE SEQUENCE</scope>
</reference>